<sequence>SLVHAQSILAIWACQVVLMGAVEGYRIAGGPLGEVVDPLYPGGSFDPLGLAEDPEAFAELKVKEIKNGRLAMFSMFGFFVQAIVTGKGPLENLADHLADPVNNNAWSYATNFVPGK</sequence>
<organism>
    <name type="scientific">Solanum lycopersicum</name>
    <name type="common">Tomato</name>
    <name type="synonym">Lycopersicon esculentum</name>
    <dbReference type="NCBI Taxonomy" id="4081"/>
    <lineage>
        <taxon>Eukaryota</taxon>
        <taxon>Viridiplantae</taxon>
        <taxon>Streptophyta</taxon>
        <taxon>Embryophyta</taxon>
        <taxon>Tracheophyta</taxon>
        <taxon>Spermatophyta</taxon>
        <taxon>Magnoliopsida</taxon>
        <taxon>eudicotyledons</taxon>
        <taxon>Gunneridae</taxon>
        <taxon>Pentapetalae</taxon>
        <taxon>asterids</taxon>
        <taxon>lamiids</taxon>
        <taxon>Solanales</taxon>
        <taxon>Solanaceae</taxon>
        <taxon>Solanoideae</taxon>
        <taxon>Solaneae</taxon>
        <taxon>Solanum</taxon>
        <taxon>Solanum subgen. Lycopersicon</taxon>
    </lineage>
</organism>
<accession>P10707</accession>
<reference key="1">
    <citation type="journal article" date="1985" name="Gene">
        <title>Molecular characterization and genetic mapping of two clusters of genes encoding chlorophyll a/b-binding proteins in Lycopersicon esculentum (tomato).</title>
        <authorList>
            <person name="Pichersky E."/>
            <person name="Bernatzky R."/>
            <person name="Tanksley S.D."/>
            <person name="Breidenbach R.B."/>
            <person name="Kausch A.P."/>
            <person name="Cashmore A.R."/>
        </authorList>
    </citation>
    <scope>NUCLEOTIDE SEQUENCE [GENOMIC DNA]</scope>
    <source>
        <strain>cv. T6</strain>
    </source>
</reference>
<proteinExistence type="inferred from homology"/>
<comment type="function">
    <text>The light-harvesting complex (LHC) functions as a light receptor, it captures and delivers excitation energy to photosystems with which it is closely associated.</text>
</comment>
<comment type="cofactor">
    <text evidence="1">Binds at least 14 chlorophylls (8 Chl-a and 6 Chl-b) and carotenoids such as lutein and neoxanthin.</text>
</comment>
<comment type="subunit">
    <text>The LHC complex consists of chlorophyll a-b binding proteins.</text>
</comment>
<comment type="subcellular location">
    <subcellularLocation>
        <location>Plastid</location>
        <location>Chloroplast thylakoid membrane</location>
        <topology>Multi-pass membrane protein</topology>
    </subcellularLocation>
</comment>
<comment type="domain">
    <text>The N-terminus of the protein extends into the stroma where it is involved with adhesion of granal membranes and post-translational modifications; both are believed to mediate the distribution of excitation energy between photosystems I and II.</text>
</comment>
<comment type="PTM">
    <text evidence="1">Photoregulated by reversible phosphorylation of its threonine residues.</text>
</comment>
<comment type="similarity">
    <text evidence="5">Belongs to the light-harvesting chlorophyll a/b-binding (LHC) protein family.</text>
</comment>
<evidence type="ECO:0000250" key="1"/>
<evidence type="ECO:0000250" key="2">
    <source>
        <dbReference type="UniProtKB" id="P07371"/>
    </source>
</evidence>
<evidence type="ECO:0000250" key="3">
    <source>
        <dbReference type="UniProtKB" id="P12333"/>
    </source>
</evidence>
<evidence type="ECO:0000255" key="4"/>
<evidence type="ECO:0000305" key="5"/>
<dbReference type="EMBL" id="M14449">
    <property type="protein sequence ID" value="AAA34158.1"/>
    <property type="molecule type" value="Genomic_DNA"/>
</dbReference>
<dbReference type="PIR" id="D24039">
    <property type="entry name" value="D24039"/>
</dbReference>
<dbReference type="SMR" id="P10707"/>
<dbReference type="STRING" id="4081.P10707"/>
<dbReference type="PaxDb" id="4081-Solyc02g071000.1.1"/>
<dbReference type="InParanoid" id="P10707"/>
<dbReference type="Proteomes" id="UP000004994">
    <property type="component" value="Unplaced"/>
</dbReference>
<dbReference type="ExpressionAtlas" id="P10707">
    <property type="expression patterns" value="baseline and differential"/>
</dbReference>
<dbReference type="GO" id="GO:0009535">
    <property type="term" value="C:chloroplast thylakoid membrane"/>
    <property type="evidence" value="ECO:0007669"/>
    <property type="project" value="UniProtKB-SubCell"/>
</dbReference>
<dbReference type="GO" id="GO:0009522">
    <property type="term" value="C:photosystem I"/>
    <property type="evidence" value="ECO:0007669"/>
    <property type="project" value="UniProtKB-KW"/>
</dbReference>
<dbReference type="GO" id="GO:0009523">
    <property type="term" value="C:photosystem II"/>
    <property type="evidence" value="ECO:0007669"/>
    <property type="project" value="UniProtKB-KW"/>
</dbReference>
<dbReference type="GO" id="GO:0016168">
    <property type="term" value="F:chlorophyll binding"/>
    <property type="evidence" value="ECO:0007669"/>
    <property type="project" value="UniProtKB-KW"/>
</dbReference>
<dbReference type="GO" id="GO:0046872">
    <property type="term" value="F:metal ion binding"/>
    <property type="evidence" value="ECO:0007669"/>
    <property type="project" value="UniProtKB-KW"/>
</dbReference>
<dbReference type="GO" id="GO:0009765">
    <property type="term" value="P:photosynthesis, light harvesting"/>
    <property type="evidence" value="ECO:0007669"/>
    <property type="project" value="InterPro"/>
</dbReference>
<dbReference type="FunFam" id="1.10.3460.10:FF:000013">
    <property type="entry name" value="Chlorophyll a-b binding protein 3A, chloroplastic"/>
    <property type="match status" value="1"/>
</dbReference>
<dbReference type="Gene3D" id="1.10.3460.10">
    <property type="entry name" value="Chlorophyll a/b binding protein domain"/>
    <property type="match status" value="1"/>
</dbReference>
<dbReference type="InterPro" id="IPR001344">
    <property type="entry name" value="Chloro_AB-bd_pln"/>
</dbReference>
<dbReference type="InterPro" id="IPR022796">
    <property type="entry name" value="Chloroa_b-bind"/>
</dbReference>
<dbReference type="PANTHER" id="PTHR21649">
    <property type="entry name" value="CHLOROPHYLL A/B BINDING PROTEIN"/>
    <property type="match status" value="1"/>
</dbReference>
<dbReference type="Pfam" id="PF00504">
    <property type="entry name" value="Chloroa_b-bind"/>
    <property type="match status" value="1"/>
</dbReference>
<dbReference type="SUPFAM" id="SSF103511">
    <property type="entry name" value="Chlorophyll a-b binding protein"/>
    <property type="match status" value="1"/>
</dbReference>
<keyword id="KW-0148">Chlorophyll</keyword>
<keyword id="KW-0150">Chloroplast</keyword>
<keyword id="KW-0157">Chromophore</keyword>
<keyword id="KW-0460">Magnesium</keyword>
<keyword id="KW-0472">Membrane</keyword>
<keyword id="KW-0479">Metal-binding</keyword>
<keyword id="KW-0597">Phosphoprotein</keyword>
<keyword id="KW-0602">Photosynthesis</keyword>
<keyword id="KW-0603">Photosystem I</keyword>
<keyword id="KW-0604">Photosystem II</keyword>
<keyword id="KW-0934">Plastid</keyword>
<keyword id="KW-1185">Reference proteome</keyword>
<keyword id="KW-0793">Thylakoid</keyword>
<keyword id="KW-0812">Transmembrane</keyword>
<keyword id="KW-1133">Transmembrane helix</keyword>
<gene>
    <name type="primary">CAB1D</name>
</gene>
<name>CB2D_SOLLC</name>
<feature type="chain" id="PRO_0000165473" description="Chlorophyll a-b binding protein 1D">
    <location>
        <begin position="1" status="less than"/>
        <end position="116"/>
    </location>
</feature>
<feature type="transmembrane region" description="Helical" evidence="4">
    <location>
        <begin position="2"/>
        <end position="22"/>
    </location>
</feature>
<feature type="transmembrane region" description="Helical" evidence="4">
    <location>
        <begin position="70"/>
        <end position="90"/>
    </location>
</feature>
<feature type="binding site" description="axial binding residue" evidence="3">
    <location>
        <position position="3"/>
    </location>
    <ligand>
        <name>chlorophyll b</name>
        <dbReference type="ChEBI" id="CHEBI:61721"/>
        <label>2</label>
    </ligand>
    <ligandPart>
        <name>Mg</name>
        <dbReference type="ChEBI" id="CHEBI:25107"/>
    </ligandPart>
</feature>
<feature type="binding site" evidence="1">
    <location>
        <position position="7"/>
    </location>
    <ligand>
        <name>chlorophyll b</name>
        <dbReference type="ChEBI" id="CHEBI:61721"/>
        <label>3</label>
    </ligand>
</feature>
<feature type="binding site" evidence="1">
    <location>
        <position position="15"/>
    </location>
    <ligand>
        <name>chlorophyll b</name>
        <dbReference type="ChEBI" id="CHEBI:61721"/>
        <label>4</label>
    </ligand>
</feature>
<feature type="binding site" evidence="2">
    <location>
        <position position="15"/>
    </location>
    <ligand>
        <name>chlorophyll b</name>
        <dbReference type="ChEBI" id="CHEBI:61721"/>
        <label>5</label>
    </ligand>
</feature>
<feature type="binding site" description="axial binding residue" evidence="3">
    <location>
        <position position="23"/>
    </location>
    <ligand>
        <name>chlorophyll b</name>
        <dbReference type="ChEBI" id="CHEBI:61721"/>
        <label>3</label>
    </ligand>
    <ligandPart>
        <name>Mg</name>
        <dbReference type="ChEBI" id="CHEBI:25107"/>
    </ligandPart>
</feature>
<feature type="binding site" evidence="1">
    <location>
        <position position="26"/>
    </location>
    <ligand>
        <name>chlorophyll b</name>
        <dbReference type="ChEBI" id="CHEBI:61721"/>
        <label>4</label>
    </ligand>
</feature>
<feature type="binding site" evidence="1">
    <location>
        <position position="32"/>
    </location>
    <ligand>
        <name>chlorophyll b</name>
        <dbReference type="ChEBI" id="CHEBI:61721"/>
        <label>2</label>
    </ligand>
</feature>
<feature type="binding site" evidence="1">
    <location>
        <position position="63"/>
    </location>
    <ligand>
        <name>chlorophyll a</name>
        <dbReference type="ChEBI" id="CHEBI:58416"/>
        <label>5</label>
    </ligand>
</feature>
<feature type="binding site" description="axial binding residue" evidence="3">
    <location>
        <position position="64"/>
    </location>
    <ligand>
        <name>chlorophyll a</name>
        <dbReference type="ChEBI" id="CHEBI:58416"/>
        <label>3</label>
    </ligand>
    <ligandPart>
        <name>Mg</name>
        <dbReference type="ChEBI" id="CHEBI:25107"/>
    </ligandPart>
</feature>
<feature type="binding site" description="axial binding residue" evidence="3">
    <location>
        <position position="67"/>
    </location>
    <ligand>
        <name>chlorophyll a</name>
        <dbReference type="ChEBI" id="CHEBI:58416"/>
        <label>4</label>
    </ligand>
    <ligandPart>
        <name>Mg</name>
        <dbReference type="ChEBI" id="CHEBI:25107"/>
    </ligandPart>
</feature>
<feature type="binding site" description="axial binding residue" evidence="3">
    <location>
        <position position="81"/>
    </location>
    <ligand>
        <name>chlorophyll a</name>
        <dbReference type="ChEBI" id="CHEBI:58416"/>
        <label>5</label>
    </ligand>
    <ligandPart>
        <name>Mg</name>
        <dbReference type="ChEBI" id="CHEBI:25107"/>
    </ligandPart>
</feature>
<feature type="binding site" description="axial binding residue" evidence="3">
    <location>
        <position position="96"/>
    </location>
    <ligand>
        <name>chlorophyll a</name>
        <dbReference type="ChEBI" id="CHEBI:58416"/>
        <label>6</label>
    </ligand>
    <ligandPart>
        <name>Mg</name>
        <dbReference type="ChEBI" id="CHEBI:25107"/>
    </ligandPart>
</feature>
<feature type="binding site" evidence="1">
    <location>
        <position position="105"/>
    </location>
    <ligand>
        <name>chlorophyll a</name>
        <dbReference type="ChEBI" id="CHEBI:58416"/>
        <label>6</label>
    </ligand>
</feature>
<feature type="binding site" evidence="1">
    <location>
        <position position="112"/>
    </location>
    <ligand>
        <name>chlorophyll b</name>
        <dbReference type="ChEBI" id="CHEBI:61721"/>
        <label>5</label>
    </ligand>
</feature>
<feature type="non-terminal residue">
    <location>
        <position position="1"/>
    </location>
</feature>
<protein>
    <recommendedName>
        <fullName>Chlorophyll a-b binding protein 1D</fullName>
    </recommendedName>
    <alternativeName>
        <fullName>LHCII type I CAB-1D</fullName>
        <shortName>LHCP</shortName>
    </alternativeName>
</protein>